<dbReference type="EC" id="2.3.1.29" evidence="1"/>
<dbReference type="EMBL" id="AE005674">
    <property type="protein sequence ID" value="AAN45104.1"/>
    <property type="molecule type" value="Genomic_DNA"/>
</dbReference>
<dbReference type="EMBL" id="AE014073">
    <property type="protein sequence ID" value="AAP19087.1"/>
    <property type="molecule type" value="Genomic_DNA"/>
</dbReference>
<dbReference type="RefSeq" id="NP_709397.1">
    <property type="nucleotide sequence ID" value="NC_004337.2"/>
</dbReference>
<dbReference type="RefSeq" id="WP_001213834.1">
    <property type="nucleotide sequence ID" value="NZ_WPGW01000260.1"/>
</dbReference>
<dbReference type="SMR" id="P0AB79"/>
<dbReference type="STRING" id="198214.SF3657"/>
<dbReference type="PaxDb" id="198214-SF3657"/>
<dbReference type="GeneID" id="1026224"/>
<dbReference type="GeneID" id="75202189"/>
<dbReference type="KEGG" id="sfl:SF3657"/>
<dbReference type="KEGG" id="sfx:S4110"/>
<dbReference type="PATRIC" id="fig|198214.7.peg.4319"/>
<dbReference type="HOGENOM" id="CLU_015846_11_0_6"/>
<dbReference type="UniPathway" id="UPA00046">
    <property type="reaction ID" value="UER00506"/>
</dbReference>
<dbReference type="Proteomes" id="UP000001006">
    <property type="component" value="Chromosome"/>
</dbReference>
<dbReference type="Proteomes" id="UP000002673">
    <property type="component" value="Chromosome"/>
</dbReference>
<dbReference type="GO" id="GO:0005829">
    <property type="term" value="C:cytosol"/>
    <property type="evidence" value="ECO:0007669"/>
    <property type="project" value="TreeGrafter"/>
</dbReference>
<dbReference type="GO" id="GO:0008890">
    <property type="term" value="F:glycine C-acetyltransferase activity"/>
    <property type="evidence" value="ECO:0007669"/>
    <property type="project" value="UniProtKB-UniRule"/>
</dbReference>
<dbReference type="GO" id="GO:0030170">
    <property type="term" value="F:pyridoxal phosphate binding"/>
    <property type="evidence" value="ECO:0007669"/>
    <property type="project" value="UniProtKB-UniRule"/>
</dbReference>
<dbReference type="GO" id="GO:0009058">
    <property type="term" value="P:biosynthetic process"/>
    <property type="evidence" value="ECO:0007669"/>
    <property type="project" value="InterPro"/>
</dbReference>
<dbReference type="GO" id="GO:0019518">
    <property type="term" value="P:L-threonine catabolic process to glycine"/>
    <property type="evidence" value="ECO:0007669"/>
    <property type="project" value="UniProtKB-UniRule"/>
</dbReference>
<dbReference type="CDD" id="cd06454">
    <property type="entry name" value="KBL_like"/>
    <property type="match status" value="1"/>
</dbReference>
<dbReference type="FunFam" id="3.90.1150.10:FF:000004">
    <property type="entry name" value="2-amino-3-ketobutyrate coenzyme A ligase"/>
    <property type="match status" value="1"/>
</dbReference>
<dbReference type="FunFam" id="3.40.640.10:FF:000006">
    <property type="entry name" value="5-aminolevulinate synthase, mitochondrial"/>
    <property type="match status" value="1"/>
</dbReference>
<dbReference type="Gene3D" id="3.90.1150.10">
    <property type="entry name" value="Aspartate Aminotransferase, domain 1"/>
    <property type="match status" value="1"/>
</dbReference>
<dbReference type="Gene3D" id="3.40.640.10">
    <property type="entry name" value="Type I PLP-dependent aspartate aminotransferase-like (Major domain)"/>
    <property type="match status" value="1"/>
</dbReference>
<dbReference type="HAMAP" id="MF_00985">
    <property type="entry name" value="2am3keto_CoA_ligase"/>
    <property type="match status" value="1"/>
</dbReference>
<dbReference type="InterPro" id="IPR011282">
    <property type="entry name" value="2am3keto_CoA_ligase"/>
</dbReference>
<dbReference type="InterPro" id="IPR001917">
    <property type="entry name" value="Aminotrans_II_pyridoxalP_BS"/>
</dbReference>
<dbReference type="InterPro" id="IPR004839">
    <property type="entry name" value="Aminotransferase_I/II_large"/>
</dbReference>
<dbReference type="InterPro" id="IPR050087">
    <property type="entry name" value="AON_synthase_class-II"/>
</dbReference>
<dbReference type="InterPro" id="IPR015424">
    <property type="entry name" value="PyrdxlP-dep_Trfase"/>
</dbReference>
<dbReference type="InterPro" id="IPR015421">
    <property type="entry name" value="PyrdxlP-dep_Trfase_major"/>
</dbReference>
<dbReference type="InterPro" id="IPR015422">
    <property type="entry name" value="PyrdxlP-dep_Trfase_small"/>
</dbReference>
<dbReference type="NCBIfam" id="TIGR01822">
    <property type="entry name" value="2am3keto_CoA"/>
    <property type="match status" value="1"/>
</dbReference>
<dbReference type="NCBIfam" id="NF005394">
    <property type="entry name" value="PRK06939.1"/>
    <property type="match status" value="1"/>
</dbReference>
<dbReference type="PANTHER" id="PTHR13693:SF102">
    <property type="entry name" value="2-AMINO-3-KETOBUTYRATE COENZYME A LIGASE, MITOCHONDRIAL"/>
    <property type="match status" value="1"/>
</dbReference>
<dbReference type="PANTHER" id="PTHR13693">
    <property type="entry name" value="CLASS II AMINOTRANSFERASE/8-AMINO-7-OXONONANOATE SYNTHASE"/>
    <property type="match status" value="1"/>
</dbReference>
<dbReference type="Pfam" id="PF00155">
    <property type="entry name" value="Aminotran_1_2"/>
    <property type="match status" value="1"/>
</dbReference>
<dbReference type="SUPFAM" id="SSF53383">
    <property type="entry name" value="PLP-dependent transferases"/>
    <property type="match status" value="1"/>
</dbReference>
<dbReference type="PROSITE" id="PS00599">
    <property type="entry name" value="AA_TRANSFER_CLASS_2"/>
    <property type="match status" value="1"/>
</dbReference>
<comment type="function">
    <text evidence="1">Catalyzes the cleavage of 2-amino-3-ketobutyrate to glycine and acetyl-CoA.</text>
</comment>
<comment type="catalytic activity">
    <reaction evidence="1">
        <text>glycine + acetyl-CoA = (2S)-2-amino-3-oxobutanoate + CoA</text>
        <dbReference type="Rhea" id="RHEA:20736"/>
        <dbReference type="ChEBI" id="CHEBI:57287"/>
        <dbReference type="ChEBI" id="CHEBI:57288"/>
        <dbReference type="ChEBI" id="CHEBI:57305"/>
        <dbReference type="ChEBI" id="CHEBI:78948"/>
        <dbReference type="EC" id="2.3.1.29"/>
    </reaction>
</comment>
<comment type="cofactor">
    <cofactor evidence="1">
        <name>pyridoxal 5'-phosphate</name>
        <dbReference type="ChEBI" id="CHEBI:597326"/>
    </cofactor>
    <text evidence="1">Binds 1 pyridoxal phosphate per subunit.</text>
</comment>
<comment type="pathway">
    <text evidence="1">Amino-acid degradation; L-threonine degradation via oxydo-reductase pathway; glycine from L-threonine: step 2/2.</text>
</comment>
<comment type="subunit">
    <text evidence="1">Homodimer.</text>
</comment>
<comment type="similarity">
    <text evidence="1">Belongs to the class-II pyridoxal-phosphate-dependent aminotransferase family.</text>
</comment>
<proteinExistence type="inferred from homology"/>
<sequence length="398" mass="43117">MRGEFYQQLTNDLETARAEGLFKEERIITSAQQADITVADGSHVINFCANNYLGLANHPDLIAAAKAGMDSHGFGMASVRFICGTQDSHKELEQKLAAFLGMEDAILYSSCFDANGGLFETLLGAEDAIISDALNHASIIDGVRLCKAKRYRYANNDMQELEARLKEAREAGARHVLIATDGVFSMDGVIANLKGVCDLADKYDALVMVDDSHAVGFVGENGRGSHEYCDVMGRVDIITGTLGKALGGASGGYTAARKEVVEWLRQRSRPYLFSNSLAPAIVAASIKVLEMVEAGSELRDRLWANARQFREQMSAAGFTLAGADHAIIPVMLGDAVVAQKFARELQKEGIYVTGFFYPVVPKGQARIRTQMSAAHTPEQITRAVEAFTRIGKQLGVIA</sequence>
<feature type="chain" id="PRO_0000163846" description="2-amino-3-ketobutyrate coenzyme A ligase">
    <location>
        <begin position="1"/>
        <end position="398"/>
    </location>
</feature>
<feature type="binding site" description="in other chain" evidence="1">
    <location>
        <begin position="111"/>
        <end position="112"/>
    </location>
    <ligand>
        <name>pyridoxal 5'-phosphate</name>
        <dbReference type="ChEBI" id="CHEBI:597326"/>
        <note>ligand shared between dimeric partners</note>
    </ligand>
</feature>
<feature type="binding site" evidence="1">
    <location>
        <position position="136"/>
    </location>
    <ligand>
        <name>substrate</name>
    </ligand>
</feature>
<feature type="binding site" description="in other chain" evidence="1">
    <location>
        <position position="185"/>
    </location>
    <ligand>
        <name>pyridoxal 5'-phosphate</name>
        <dbReference type="ChEBI" id="CHEBI:597326"/>
        <note>ligand shared between dimeric partners</note>
    </ligand>
</feature>
<feature type="binding site" description="in other chain" evidence="1">
    <location>
        <begin position="210"/>
        <end position="213"/>
    </location>
    <ligand>
        <name>pyridoxal 5'-phosphate</name>
        <dbReference type="ChEBI" id="CHEBI:597326"/>
        <note>ligand shared between dimeric partners</note>
    </ligand>
</feature>
<feature type="binding site" description="in other chain" evidence="1">
    <location>
        <begin position="241"/>
        <end position="244"/>
    </location>
    <ligand>
        <name>pyridoxal 5'-phosphate</name>
        <dbReference type="ChEBI" id="CHEBI:597326"/>
        <note>ligand shared between dimeric partners</note>
    </ligand>
</feature>
<feature type="binding site" evidence="1">
    <location>
        <begin position="274"/>
        <end position="275"/>
    </location>
    <ligand>
        <name>pyridoxal 5'-phosphate</name>
        <dbReference type="ChEBI" id="CHEBI:597326"/>
        <note>ligand shared between dimeric partners</note>
    </ligand>
</feature>
<feature type="binding site" evidence="1">
    <location>
        <position position="368"/>
    </location>
    <ligand>
        <name>substrate</name>
    </ligand>
</feature>
<feature type="modified residue" description="N6-(pyridoxal phosphate)lysine" evidence="1">
    <location>
        <position position="244"/>
    </location>
</feature>
<protein>
    <recommendedName>
        <fullName evidence="1">2-amino-3-ketobutyrate coenzyme A ligase</fullName>
        <shortName evidence="1">AKB ligase</shortName>
        <shortName>KBL</shortName>
        <ecNumber evidence="1">2.3.1.29</ecNumber>
    </recommendedName>
    <alternativeName>
        <fullName evidence="1">Glycine acetyltransferase</fullName>
    </alternativeName>
</protein>
<name>KBL_SHIFL</name>
<keyword id="KW-0012">Acyltransferase</keyword>
<keyword id="KW-0663">Pyridoxal phosphate</keyword>
<keyword id="KW-1185">Reference proteome</keyword>
<keyword id="KW-0808">Transferase</keyword>
<reference key="1">
    <citation type="journal article" date="2002" name="Nucleic Acids Res.">
        <title>Genome sequence of Shigella flexneri 2a: insights into pathogenicity through comparison with genomes of Escherichia coli K12 and O157.</title>
        <authorList>
            <person name="Jin Q."/>
            <person name="Yuan Z."/>
            <person name="Xu J."/>
            <person name="Wang Y."/>
            <person name="Shen Y."/>
            <person name="Lu W."/>
            <person name="Wang J."/>
            <person name="Liu H."/>
            <person name="Yang J."/>
            <person name="Yang F."/>
            <person name="Zhang X."/>
            <person name="Zhang J."/>
            <person name="Yang G."/>
            <person name="Wu H."/>
            <person name="Qu D."/>
            <person name="Dong J."/>
            <person name="Sun L."/>
            <person name="Xue Y."/>
            <person name="Zhao A."/>
            <person name="Gao Y."/>
            <person name="Zhu J."/>
            <person name="Kan B."/>
            <person name="Ding K."/>
            <person name="Chen S."/>
            <person name="Cheng H."/>
            <person name="Yao Z."/>
            <person name="He B."/>
            <person name="Chen R."/>
            <person name="Ma D."/>
            <person name="Qiang B."/>
            <person name="Wen Y."/>
            <person name="Hou Y."/>
            <person name="Yu J."/>
        </authorList>
    </citation>
    <scope>NUCLEOTIDE SEQUENCE [LARGE SCALE GENOMIC DNA]</scope>
    <source>
        <strain>301 / Serotype 2a</strain>
    </source>
</reference>
<reference key="2">
    <citation type="journal article" date="2003" name="Infect. Immun.">
        <title>Complete genome sequence and comparative genomics of Shigella flexneri serotype 2a strain 2457T.</title>
        <authorList>
            <person name="Wei J."/>
            <person name="Goldberg M.B."/>
            <person name="Burland V."/>
            <person name="Venkatesan M.M."/>
            <person name="Deng W."/>
            <person name="Fournier G."/>
            <person name="Mayhew G.F."/>
            <person name="Plunkett G. III"/>
            <person name="Rose D.J."/>
            <person name="Darling A."/>
            <person name="Mau B."/>
            <person name="Perna N.T."/>
            <person name="Payne S.M."/>
            <person name="Runyen-Janecky L.J."/>
            <person name="Zhou S."/>
            <person name="Schwartz D.C."/>
            <person name="Blattner F.R."/>
        </authorList>
    </citation>
    <scope>NUCLEOTIDE SEQUENCE [LARGE SCALE GENOMIC DNA]</scope>
    <source>
        <strain>ATCC 700930 / 2457T / Serotype 2a</strain>
    </source>
</reference>
<accession>P0AB79</accession>
<accession>P07912</accession>
<evidence type="ECO:0000255" key="1">
    <source>
        <dbReference type="HAMAP-Rule" id="MF_00985"/>
    </source>
</evidence>
<organism>
    <name type="scientific">Shigella flexneri</name>
    <dbReference type="NCBI Taxonomy" id="623"/>
    <lineage>
        <taxon>Bacteria</taxon>
        <taxon>Pseudomonadati</taxon>
        <taxon>Pseudomonadota</taxon>
        <taxon>Gammaproteobacteria</taxon>
        <taxon>Enterobacterales</taxon>
        <taxon>Enterobacteriaceae</taxon>
        <taxon>Shigella</taxon>
    </lineage>
</organism>
<gene>
    <name evidence="1" type="primary">kbl</name>
    <name type="ordered locus">SF3657</name>
    <name type="ordered locus">S4110</name>
</gene>